<sequence>MLMPKKNRIAIYELLFKEGVMVAKKDVHMPKHPELADKNVPNLHVMKAMQSLKSRGYVKEQFAWRHFYWYLTNEGIQYLRDYLHLPPEIVPATLRRSRPETGRPRPKGLEGERPARLTRGEADRDTYRRSAVPPGADKKAEAGAGSATEFQFRGGFGRGRGQPPQ</sequence>
<evidence type="ECO:0000250" key="1">
    <source>
        <dbReference type="UniProtKB" id="P46783"/>
    </source>
</evidence>
<evidence type="ECO:0000250" key="2">
    <source>
        <dbReference type="UniProtKB" id="P63325"/>
    </source>
</evidence>
<evidence type="ECO:0000256" key="3">
    <source>
        <dbReference type="SAM" id="MobiDB-lite"/>
    </source>
</evidence>
<evidence type="ECO:0000269" key="4">
    <source>
    </source>
</evidence>
<evidence type="ECO:0000269" key="5">
    <source>
    </source>
</evidence>
<evidence type="ECO:0000269" key="6">
    <source>
    </source>
</evidence>
<evidence type="ECO:0000269" key="7">
    <source>
    </source>
</evidence>
<evidence type="ECO:0000269" key="8">
    <source>
    </source>
</evidence>
<evidence type="ECO:0000269" key="9">
    <source>
    </source>
</evidence>
<evidence type="ECO:0000269" key="10">
    <source>
    </source>
</evidence>
<evidence type="ECO:0000269" key="11">
    <source>
    </source>
</evidence>
<evidence type="ECO:0000269" key="12">
    <source>
    </source>
</evidence>
<evidence type="ECO:0000269" key="13">
    <source>
    </source>
</evidence>
<evidence type="ECO:0000269" key="14">
    <source>
    </source>
</evidence>
<evidence type="ECO:0000269" key="15">
    <source>
    </source>
</evidence>
<evidence type="ECO:0000269" key="16">
    <source>
    </source>
</evidence>
<evidence type="ECO:0000269" key="17">
    <source>
    </source>
</evidence>
<evidence type="ECO:0000269" key="18">
    <source>
    </source>
</evidence>
<evidence type="ECO:0000269" key="19">
    <source>
    </source>
</evidence>
<evidence type="ECO:0000269" key="20">
    <source>
    </source>
</evidence>
<evidence type="ECO:0000305" key="21"/>
<evidence type="ECO:0007744" key="22">
    <source>
        <dbReference type="PDB" id="3JAG"/>
    </source>
</evidence>
<evidence type="ECO:0007744" key="23">
    <source>
        <dbReference type="PDB" id="3JAH"/>
    </source>
</evidence>
<evidence type="ECO:0007744" key="24">
    <source>
        <dbReference type="PDB" id="4D5L"/>
    </source>
</evidence>
<evidence type="ECO:0007744" key="25">
    <source>
        <dbReference type="PDB" id="4D61"/>
    </source>
</evidence>
<evidence type="ECO:0007744" key="26">
    <source>
        <dbReference type="PDB" id="4KZX"/>
    </source>
</evidence>
<evidence type="ECO:0007744" key="27">
    <source>
        <dbReference type="PDB" id="4KZY"/>
    </source>
</evidence>
<evidence type="ECO:0007744" key="28">
    <source>
        <dbReference type="PDB" id="5LZS"/>
    </source>
</evidence>
<evidence type="ECO:0007744" key="29">
    <source>
        <dbReference type="PDB" id="5LZT"/>
    </source>
</evidence>
<evidence type="ECO:0007744" key="30">
    <source>
        <dbReference type="PDB" id="6D90"/>
    </source>
</evidence>
<evidence type="ECO:0007744" key="31">
    <source>
        <dbReference type="PDB" id="6GZ3"/>
    </source>
</evidence>
<evidence type="ECO:0007744" key="32">
    <source>
        <dbReference type="PDB" id="6HCF"/>
    </source>
</evidence>
<evidence type="ECO:0007744" key="33">
    <source>
        <dbReference type="PDB" id="6HCJ"/>
    </source>
</evidence>
<evidence type="ECO:0007744" key="34">
    <source>
        <dbReference type="PDB" id="6MTB"/>
    </source>
</evidence>
<evidence type="ECO:0007744" key="35">
    <source>
        <dbReference type="PDB" id="6MTC"/>
    </source>
</evidence>
<evidence type="ECO:0007744" key="36">
    <source>
        <dbReference type="PDB" id="6P4G"/>
    </source>
</evidence>
<evidence type="ECO:0007744" key="37">
    <source>
        <dbReference type="PDB" id="6P4H"/>
    </source>
</evidence>
<evidence type="ECO:0007744" key="38">
    <source>
        <dbReference type="PDB" id="6R5Q"/>
    </source>
</evidence>
<evidence type="ECO:0007744" key="39">
    <source>
        <dbReference type="PDB" id="6R6G"/>
    </source>
</evidence>
<evidence type="ECO:0007744" key="40">
    <source>
        <dbReference type="PDB" id="6SGC"/>
    </source>
</evidence>
<evidence type="ECO:0007744" key="41">
    <source>
        <dbReference type="PDB" id="6W2S"/>
    </source>
</evidence>
<evidence type="ECO:0007744" key="42">
    <source>
        <dbReference type="PDB" id="6W2T"/>
    </source>
</evidence>
<evidence type="ECO:0007744" key="43">
    <source>
        <dbReference type="PDB" id="6ZVK"/>
    </source>
</evidence>
<evidence type="ECO:0007744" key="44">
    <source>
        <dbReference type="PDB" id="7A01"/>
    </source>
</evidence>
<evidence type="ECO:0007744" key="45">
    <source>
        <dbReference type="PDB" id="7OYD"/>
    </source>
</evidence>
<evidence type="ECO:0007744" key="46">
    <source>
        <dbReference type="PDB" id="7SYI"/>
    </source>
</evidence>
<evidence type="ECO:0007744" key="47">
    <source>
        <dbReference type="PDB" id="7SYJ"/>
    </source>
</evidence>
<evidence type="ECO:0007744" key="48">
    <source>
        <dbReference type="PDB" id="7UCJ"/>
    </source>
</evidence>
<evidence type="ECO:0007744" key="49">
    <source>
        <dbReference type="PDB" id="7UCK"/>
    </source>
</evidence>
<evidence type="ECO:0007744" key="50">
    <source>
        <dbReference type="PDB" id="7ZJW"/>
    </source>
</evidence>
<evidence type="ECO:0007744" key="51">
    <source>
        <dbReference type="PDB" id="7ZJX"/>
    </source>
</evidence>
<gene>
    <name type="primary">RPS10</name>
</gene>
<reference key="1">
    <citation type="journal article" date="2011" name="Nature">
        <title>A high-resolution map of human evolutionary constraint using 29 mammals.</title>
        <authorList>
            <person name="Lindblad-Toh K."/>
            <person name="Garber M."/>
            <person name="Zuk O."/>
            <person name="Lin M.F."/>
            <person name="Parker B.J."/>
            <person name="Washietl S."/>
            <person name="Kheradpour P."/>
            <person name="Ernst J."/>
            <person name="Jordan G."/>
            <person name="Mauceli E."/>
            <person name="Ward L.D."/>
            <person name="Lowe C.B."/>
            <person name="Holloway A.K."/>
            <person name="Clamp M."/>
            <person name="Gnerre S."/>
            <person name="Alfoldi J."/>
            <person name="Beal K."/>
            <person name="Chang J."/>
            <person name="Clawson H."/>
            <person name="Cuff J."/>
            <person name="Di Palma F."/>
            <person name="Fitzgerald S."/>
            <person name="Flicek P."/>
            <person name="Guttman M."/>
            <person name="Hubisz M.J."/>
            <person name="Jaffe D.B."/>
            <person name="Jungreis I."/>
            <person name="Kent W.J."/>
            <person name="Kostka D."/>
            <person name="Lara M."/>
            <person name="Martins A.L."/>
            <person name="Massingham T."/>
            <person name="Moltke I."/>
            <person name="Raney B.J."/>
            <person name="Rasmussen M.D."/>
            <person name="Robinson J."/>
            <person name="Stark A."/>
            <person name="Vilella A.J."/>
            <person name="Wen J."/>
            <person name="Xie X."/>
            <person name="Zody M.C."/>
            <person name="Baldwin J."/>
            <person name="Bloom T."/>
            <person name="Chin C.W."/>
            <person name="Heiman D."/>
            <person name="Nicol R."/>
            <person name="Nusbaum C."/>
            <person name="Young S."/>
            <person name="Wilkinson J."/>
            <person name="Worley K.C."/>
            <person name="Kovar C.L."/>
            <person name="Muzny D.M."/>
            <person name="Gibbs R.A."/>
            <person name="Cree A."/>
            <person name="Dihn H.H."/>
            <person name="Fowler G."/>
            <person name="Jhangiani S."/>
            <person name="Joshi V."/>
            <person name="Lee S."/>
            <person name="Lewis L.R."/>
            <person name="Nazareth L.V."/>
            <person name="Okwuonu G."/>
            <person name="Santibanez J."/>
            <person name="Warren W.C."/>
            <person name="Mardis E.R."/>
            <person name="Weinstock G.M."/>
            <person name="Wilson R.K."/>
            <person name="Delehaunty K."/>
            <person name="Dooling D."/>
            <person name="Fronik C."/>
            <person name="Fulton L."/>
            <person name="Fulton B."/>
            <person name="Graves T."/>
            <person name="Minx P."/>
            <person name="Sodergren E."/>
            <person name="Birney E."/>
            <person name="Margulies E.H."/>
            <person name="Herrero J."/>
            <person name="Green E.D."/>
            <person name="Haussler D."/>
            <person name="Siepel A."/>
            <person name="Goldman N."/>
            <person name="Pollard K.S."/>
            <person name="Pedersen J.S."/>
            <person name="Lander E.S."/>
            <person name="Kellis M."/>
        </authorList>
    </citation>
    <scope>NUCLEOTIDE SEQUENCE [LARGE SCALE GENOMIC DNA]</scope>
    <source>
        <strain>Thorbecke</strain>
    </source>
</reference>
<reference evidence="26 27" key="2">
    <citation type="journal article" date="2013" name="Nature">
        <title>The initiation of mammalian protein synthesis and mRNA scanning mechanism.</title>
        <authorList>
            <person name="Lomakin I.B."/>
            <person name="Steitz T.A."/>
        </authorList>
    </citation>
    <scope>X-RAY CRYSTALLOGRAPHY (7.01 ANGSTROMS) OF 40S RIBOSOME</scope>
    <scope>FUNCTION</scope>
    <scope>SUBUNIT</scope>
    <scope>SUBCELLULAR LOCATION</scope>
</reference>
<reference evidence="22 23" key="3">
    <citation type="journal article" date="2015" name="Nature">
        <title>Structural basis for stop codon recognition in eukaryotes.</title>
        <authorList>
            <person name="Brown A."/>
            <person name="Shao S."/>
            <person name="Murray J."/>
            <person name="Hegde R.S."/>
            <person name="Ramakrishnan V."/>
        </authorList>
    </citation>
    <scope>STRUCTURE BY ELECTRON MICROSCOPY (3.45 ANGSTROMS) OF 1-98 OF RIBOSOME</scope>
    <scope>FUNCTION</scope>
    <scope>SUBCELLULAR LOCATION</scope>
    <scope>SUBUNIT</scope>
</reference>
<reference evidence="24 25" key="4">
    <citation type="journal article" date="2015" name="Mol. Cell">
        <title>Cryo-EM of ribosomal 80S complexes with termination factors reveals the translocated cricket paralysis virus IRES.</title>
        <authorList>
            <person name="Muhs M."/>
            <person name="Hilal T."/>
            <person name="Mielke T."/>
            <person name="Skabkin M.A."/>
            <person name="Sanbonmatsu K.Y."/>
            <person name="Pestova T.V."/>
            <person name="Spahn C.M."/>
        </authorList>
    </citation>
    <scope>STRUCTURE BY ELECTRON MICROSCOPY (9.00 ANGSTROMS) OF RIBOSOME</scope>
    <scope>FUNCTION</scope>
    <scope>SUBUNIT</scope>
    <scope>SUBCELLULAR LOCATION</scope>
</reference>
<reference evidence="28 29" key="5">
    <citation type="journal article" date="2016" name="Cell">
        <title>Decoding mammalian ribosome-mRNA states by translational GTPase complexes.</title>
        <authorList>
            <person name="Shao S."/>
            <person name="Murray J."/>
            <person name="Brown A."/>
            <person name="Taunton J."/>
            <person name="Ramakrishnan V."/>
            <person name="Hegde R.S."/>
        </authorList>
    </citation>
    <scope>STRUCTURE BY ELECTRON MICROSCOPY (3.31 ANGSTROMS) OF RIBOSOME</scope>
    <scope>FUNCTION</scope>
    <scope>SUBCELLULAR LOCATION</scope>
    <scope>SUBUNIT</scope>
</reference>
<reference evidence="31" key="6">
    <citation type="journal article" date="2018" name="Cell Rep.">
        <title>tRNA translocation by the eukaryotic 80S ribosome and the impact of GTP hydrolysis.</title>
        <authorList>
            <person name="Flis J."/>
            <person name="Holm M."/>
            <person name="Rundlet E.J."/>
            <person name="Loerke J."/>
            <person name="Hilal T."/>
            <person name="Dabrowski M."/>
            <person name="Burger J."/>
            <person name="Mielke T."/>
            <person name="Blanchard S.C."/>
            <person name="Spahn C.M.T."/>
            <person name="Budkevich T.V."/>
        </authorList>
    </citation>
    <scope>STRUCTURE BY ELECTRON MICROSCOPY (3.60 ANGSTROMS) OF 1-98 OF RIBOSOME</scope>
    <scope>FUNCTION</scope>
    <scope>SUBCELLULAR LOCATION</scope>
    <scope>SUBUNIT</scope>
</reference>
<reference evidence="30" key="7">
    <citation type="journal article" date="2018" name="Elife">
        <title>Dual tRNA mimicry in the Cricket paralysis virus IRES uncovers an unexpected similarity with the Hepatitis C Virus IRES.</title>
        <authorList>
            <person name="Pisareva V.P."/>
            <person name="Pisarev A.V."/>
            <person name="Fernandez I.S."/>
        </authorList>
    </citation>
    <scope>STRUCTURE BY ELECTRON MICROSCOPY (3.20 ANGSTROMS) OF RIBOSOME</scope>
    <scope>SUBCELLULAR LOCATION</scope>
    <scope>SUBUNIT</scope>
</reference>
<reference evidence="34 35" key="8">
    <citation type="journal article" date="2018" name="Elife">
        <title>Structures of translationally inactive mammalian ribosomes.</title>
        <authorList>
            <person name="Brown A."/>
            <person name="Baird M.R."/>
            <person name="Yip M.C."/>
            <person name="Murray J."/>
            <person name="Shao S."/>
        </authorList>
    </citation>
    <scope>STRUCTURE BY ELECTRON MICROSCOPY (3.30 ANGSTROMS) OF 1-96 OF RIBOSOME</scope>
    <scope>SUBCELLULAR LOCATION</scope>
    <scope>SUBUNIT</scope>
</reference>
<reference evidence="32 33" key="9">
    <citation type="journal article" date="2018" name="Mol. Cell">
        <title>ZNF598 is a quality control sensor of collided ribosomes.</title>
        <authorList>
            <person name="Juszkiewicz S."/>
            <person name="Chandrasekaran V."/>
            <person name="Lin Z."/>
            <person name="Kraatz S."/>
            <person name="Ramakrishnan V."/>
            <person name="Hegde R.S."/>
        </authorList>
    </citation>
    <scope>STRUCTURE BY ELECTRON MICROSCOPY (3.80 ANGSTROMS) OF RIBOSOME</scope>
    <scope>SUBCELLULAR LOCATION</scope>
    <scope>SUBUNIT</scope>
</reference>
<reference evidence="38 39" key="10">
    <citation type="journal article" date="2019" name="Elife">
        <title>Structural and mutational analysis of the ribosome-arresting human XBP1u.</title>
        <authorList>
            <person name="Shanmuganathan V."/>
            <person name="Schiller N."/>
            <person name="Magoulopoulou A."/>
            <person name="Cheng J."/>
            <person name="Braunger K."/>
            <person name="Cymer F."/>
            <person name="Berninghausen O."/>
            <person name="Beatrix B."/>
            <person name="Kohno K."/>
            <person name="von Heijne G."/>
            <person name="Beckmann R."/>
        </authorList>
    </citation>
    <scope>STRUCTURE BY ELECTRON MICROSCOPY (3.00 ANGSTROMS) OF 1-96 OF RIBOSOME</scope>
    <scope>SUBCELLULAR LOCATION</scope>
    <scope>SUBUNIT</scope>
</reference>
<reference evidence="36 37" key="11">
    <citation type="journal article" date="2019" name="EMBO J.">
        <title>The Israeli acute paralysis virus IRES captures host ribosomes by mimicking a ribosomal state with hybrid tRNAs.</title>
        <authorList>
            <person name="Acosta-Reyes F."/>
            <person name="Neupane R."/>
            <person name="Frank J."/>
            <person name="Fernandez I.S."/>
        </authorList>
    </citation>
    <scope>STRUCTURE BY ELECTRON MICROSCOPY (3.10 ANGSTROMS) OF RIBOSOME</scope>
    <scope>SUBUNIT</scope>
    <scope>SUBCELLULAR LOCATION</scope>
</reference>
<reference evidence="40" key="12">
    <citation type="journal article" date="2019" name="Nat. Struct. Mol. Biol.">
        <title>Mechanism of ribosome stalling during translation of a poly(A) tail.</title>
        <authorList>
            <person name="Chandrasekaran V."/>
            <person name="Juszkiewicz S."/>
            <person name="Choi J."/>
            <person name="Puglisi J.D."/>
            <person name="Brown A."/>
            <person name="Shao S."/>
            <person name="Ramakrishnan V."/>
            <person name="Hegde R.S."/>
        </authorList>
    </citation>
    <scope>STRUCTURE BY ELECTRON MICROSCOPY (2.80 ANGSTROMS) OF RIBOSOME</scope>
    <scope>SUBCELLULAR LOCATION</scope>
    <scope>SUBUNIT</scope>
</reference>
<reference evidence="43 44" key="13">
    <citation type="journal article" date="2020" name="Cell Rep.">
        <title>The Halastavi arva virus intergenic region IRES promotes translation by the simplest possible initiation mechanism.</title>
        <authorList>
            <person name="Abaeva I.S."/>
            <person name="Vicens Q."/>
            <person name="Bochler A."/>
            <person name="Soufari H."/>
            <person name="Simonetti A."/>
            <person name="Pestova T.V."/>
            <person name="Hashem Y."/>
            <person name="Hellen C.U.T."/>
        </authorList>
    </citation>
    <scope>STRUCTURE BY ELECTRON MICROSCOPY (3.49 ANGSTROMS) OF RIBOSOME</scope>
    <scope>SUBCELLULAR LOCATION</scope>
    <scope>SUBUNIT</scope>
</reference>
<reference evidence="41 42" key="14">
    <citation type="journal article" date="2020" name="Elife">
        <title>A complex IRES at the 5'-UTR of a viral mRNA assembles a functional 48S complex via an uAUG intermediate.</title>
        <authorList>
            <person name="Neupane R."/>
            <person name="Pisareva V.P."/>
            <person name="Rodriguez C.F."/>
            <person name="Pisarev A.V."/>
            <person name="Fernandez I.S."/>
        </authorList>
    </citation>
    <scope>STRUCTURE BY ELECTRON MICROSCOPY (3.00 ANGSTROMS) OF RIBOSOME</scope>
    <scope>SUBUNIT</scope>
    <scope>SUBCELLULAR LOCATION</scope>
</reference>
<reference evidence="46 47" key="15">
    <citation type="journal article" date="2022" name="EMBO J.">
        <title>Molecular architecture of 40S translation initiation complexes on the hepatitis C virus IRES.</title>
        <authorList>
            <person name="Brown Z.P."/>
            <person name="Abaeva I.S."/>
            <person name="De S."/>
            <person name="Hellen C.U.T."/>
            <person name="Pestova T.V."/>
            <person name="Frank J."/>
        </authorList>
    </citation>
    <scope>STRUCTURE BY ELECTRON MICROSCOPY (3.50 ANGSTROMS) OF RIBOSOME</scope>
    <scope>SUBCELLULAR LOCATION</scope>
    <scope>SUBUNIT</scope>
</reference>
<reference evidence="48 49" key="16">
    <citation type="journal article" date="2022" name="Mol. Cell">
        <title>Direct epitranscriptomic regulation of mammalian translation initiation through N4-acetylcytidine.</title>
        <authorList>
            <person name="Arango D."/>
            <person name="Sturgill D."/>
            <person name="Yang R."/>
            <person name="Kanai T."/>
            <person name="Bauer P."/>
            <person name="Roy J."/>
            <person name="Wang Z."/>
            <person name="Hosogane M."/>
            <person name="Schiffers S."/>
            <person name="Oberdoerffer S."/>
        </authorList>
    </citation>
    <scope>STRUCTURE BY ELECTRON MICROSCOPY (2.80 ANGSTROMS) OF RIBOSOME</scope>
    <scope>SUBCELLULAR LOCATION</scope>
    <scope>SUBUNIT</scope>
</reference>
<reference evidence="50 51" key="17">
    <citation type="journal article" date="2022" name="Science">
        <title>Structure of the mammalian ribosome as it decodes the selenocysteine UGA codon.</title>
        <authorList>
            <person name="Hilal T."/>
            <person name="Killam B.Y."/>
            <person name="Grozdanovic M."/>
            <person name="Dobosz-Bartoszek M."/>
            <person name="Loerke J."/>
            <person name="Buerger J."/>
            <person name="Mielke T."/>
            <person name="Copeland P.R."/>
            <person name="Simonovic M."/>
            <person name="Spahn C.M.T."/>
        </authorList>
    </citation>
    <scope>STRUCTURE BY ELECTRON MICROSCOPY (2.80 ANGSTROMS) OF RIBOSOME</scope>
    <scope>SUBCELLULAR LOCATION</scope>
    <scope>SUBUNIT</scope>
</reference>
<reference evidence="45" key="18">
    <citation type="journal article" date="2023" name="Nature">
        <title>A molecular network of conserved factors keeps ribosomes dormant in the egg.</title>
        <authorList>
            <person name="Leesch F."/>
            <person name="Lorenzo-Orts L."/>
            <person name="Pribitzer C."/>
            <person name="Grishkovskaya I."/>
            <person name="Roehsner J."/>
            <person name="Chugunova A."/>
            <person name="Matzinger M."/>
            <person name="Roitinger E."/>
            <person name="Belacic K."/>
            <person name="Kandolf S."/>
            <person name="Lin T.Y."/>
            <person name="Mechtler K."/>
            <person name="Meinhart A."/>
            <person name="Haselbach D."/>
            <person name="Pauli A."/>
        </authorList>
    </citation>
    <scope>STRUCTURE BY ELECTRON MICROSCOPY (2.30 ANGSTROMS) OF RIBOSOME</scope>
    <scope>SUBCELLULAR LOCATION</scope>
    <scope>SUBUNIT</scope>
</reference>
<proteinExistence type="evidence at protein level"/>
<comment type="function">
    <text evidence="4 5 6 7 11">Component of the 40S ribosomal subunit (PubMed:23873042, PubMed:25601755, PubMed:26245381, PubMed:27863242, PubMed:30517857). The ribosome is a large ribonucleoprotein complex responsible for the synthesis of proteins in the cell (PubMed:23873042, PubMed:25601755, PubMed:26245381, PubMed:27863242, PubMed:30517857).</text>
</comment>
<comment type="subunit">
    <text evidence="1 4 5 6 7 8 9 10 11 12 13 14 15 16 17 18 19 20">Component of the small ribosomal subunit (PubMed:23873042, PubMed:25601755, PubMed:26245381, PubMed:27863242, PubMed:29856316, PubMed:30293783, PubMed:30355441, PubMed:30517857, PubMed:31246176, PubMed:31609474, PubMed:31768042, PubMed:32286223, PubMed:33296660, PubMed:35679869, PubMed:35709277, PubMed:35822879, PubMed:36653451). The methylated form interacts with NPM1 (By similarity).</text>
</comment>
<comment type="subcellular location">
    <subcellularLocation>
        <location evidence="4 5 6 7 8 9 10 11 12 13 14 15 16 17 18 19 20">Cytoplasm</location>
    </subcellularLocation>
    <subcellularLocation>
        <location evidence="1">Nucleus</location>
        <location evidence="1">Nucleolus</location>
    </subcellularLocation>
    <text evidence="1">Localized in the granular component (GC) region of the nucleolus. Methylation is required for its localization in the GC region. Colocalizes with NPS1 in the GC region of the nucleolus.</text>
</comment>
<comment type="PTM">
    <text evidence="1">Methylated by PRMT5. Methylation is necessary for its interaction with NPS1, its localization in the granular component (GC) region of the nucleolus, for the proper assembly of ribosomes, protein synthesis and optimal cell proliferation.</text>
</comment>
<comment type="PTM">
    <text evidence="1">Monoubiquitinated by ZNF598 when a ribosome has stalled during translation of poly(A) sequences, leading to preclude synthesis of a long poly-lysine tail and initiate the ribosome quality control (RQC) pathway to degrade the potentially detrimental aberrant nascent polypeptide. Deubiquitinated by OTUD3 and USP21, antagonizing ZNF598 activity. Deubiquitinated by OTUD1, antagonizing ZNF598 activity and stimulating formation of polysomes: deubiquitination by OTUD1 promotes stability and translation of a subset mRNAs with a high abundance of rare codons can limit the translation rate. Deubiquitinated by USP10.</text>
</comment>
<comment type="similarity">
    <text evidence="21">Belongs to the eukaryotic ribosomal protein eS10 family.</text>
</comment>
<dbReference type="EMBL" id="AAGW02024081">
    <property type="status" value="NOT_ANNOTATED_CDS"/>
    <property type="molecule type" value="Genomic_DNA"/>
</dbReference>
<dbReference type="RefSeq" id="XP_002714657.1">
    <property type="nucleotide sequence ID" value="XM_002714611.3"/>
</dbReference>
<dbReference type="RefSeq" id="XP_051710780.1">
    <property type="nucleotide sequence ID" value="XM_051854820.2"/>
</dbReference>
<dbReference type="PDB" id="3JAG">
    <property type="method" value="EM"/>
    <property type="resolution" value="3.65 A"/>
    <property type="chains" value="KK=1-98"/>
</dbReference>
<dbReference type="PDB" id="3JAH">
    <property type="method" value="EM"/>
    <property type="resolution" value="3.45 A"/>
    <property type="chains" value="KK=1-98"/>
</dbReference>
<dbReference type="PDB" id="3JAI">
    <property type="method" value="EM"/>
    <property type="resolution" value="3.65 A"/>
    <property type="chains" value="KK=1-98"/>
</dbReference>
<dbReference type="PDB" id="4D5L">
    <property type="method" value="EM"/>
    <property type="resolution" value="9.00 A"/>
    <property type="chains" value="K=1-165"/>
</dbReference>
<dbReference type="PDB" id="4D61">
    <property type="method" value="EM"/>
    <property type="resolution" value="9.00 A"/>
    <property type="chains" value="K=1-165"/>
</dbReference>
<dbReference type="PDB" id="4KZX">
    <property type="method" value="X-ray"/>
    <property type="resolution" value="7.81 A"/>
    <property type="chains" value="K=1-165"/>
</dbReference>
<dbReference type="PDB" id="4KZY">
    <property type="method" value="X-ray"/>
    <property type="resolution" value="7.01 A"/>
    <property type="chains" value="K=1-165"/>
</dbReference>
<dbReference type="PDB" id="4KZZ">
    <property type="method" value="X-ray"/>
    <property type="resolution" value="7.03 A"/>
    <property type="chains" value="K=1-165"/>
</dbReference>
<dbReference type="PDB" id="5K0Y">
    <property type="method" value="EM"/>
    <property type="resolution" value="5.80 A"/>
    <property type="chains" value="t=1-98"/>
</dbReference>
<dbReference type="PDB" id="5LZS">
    <property type="method" value="EM"/>
    <property type="resolution" value="3.31 A"/>
    <property type="chains" value="KK=1-165"/>
</dbReference>
<dbReference type="PDB" id="5LZT">
    <property type="method" value="EM"/>
    <property type="resolution" value="3.65 A"/>
    <property type="chains" value="KK=1-165"/>
</dbReference>
<dbReference type="PDB" id="5LZU">
    <property type="method" value="EM"/>
    <property type="resolution" value="3.75 A"/>
    <property type="chains" value="KK=1-165"/>
</dbReference>
<dbReference type="PDB" id="5LZV">
    <property type="method" value="EM"/>
    <property type="resolution" value="3.35 A"/>
    <property type="chains" value="KK=1-165"/>
</dbReference>
<dbReference type="PDB" id="5LZW">
    <property type="method" value="EM"/>
    <property type="resolution" value="3.53 A"/>
    <property type="chains" value="KK=1-165"/>
</dbReference>
<dbReference type="PDB" id="5LZX">
    <property type="method" value="EM"/>
    <property type="resolution" value="3.67 A"/>
    <property type="chains" value="KK=1-165"/>
</dbReference>
<dbReference type="PDB" id="5LZY">
    <property type="method" value="EM"/>
    <property type="resolution" value="3.99 A"/>
    <property type="chains" value="KK=1-165"/>
</dbReference>
<dbReference type="PDB" id="5LZZ">
    <property type="method" value="EM"/>
    <property type="resolution" value="3.47 A"/>
    <property type="chains" value="KK=1-165"/>
</dbReference>
<dbReference type="PDB" id="6D90">
    <property type="method" value="EM"/>
    <property type="resolution" value="3.20 A"/>
    <property type="chains" value="LL=1-149"/>
</dbReference>
<dbReference type="PDB" id="6GZ3">
    <property type="method" value="EM"/>
    <property type="resolution" value="3.60 A"/>
    <property type="chains" value="BK=1-98"/>
</dbReference>
<dbReference type="PDB" id="6HCF">
    <property type="method" value="EM"/>
    <property type="resolution" value="3.90 A"/>
    <property type="chains" value="L1=1-165"/>
</dbReference>
<dbReference type="PDB" id="6HCJ">
    <property type="method" value="EM"/>
    <property type="resolution" value="3.80 A"/>
    <property type="chains" value="L2=1-165"/>
</dbReference>
<dbReference type="PDB" id="6HCM">
    <property type="method" value="EM"/>
    <property type="resolution" value="6.80 A"/>
    <property type="chains" value="L1=1-165"/>
</dbReference>
<dbReference type="PDB" id="6HCQ">
    <property type="method" value="EM"/>
    <property type="resolution" value="6.50 A"/>
    <property type="chains" value="L2=1-165"/>
</dbReference>
<dbReference type="PDB" id="6MTB">
    <property type="method" value="EM"/>
    <property type="resolution" value="3.60 A"/>
    <property type="chains" value="KK=1-96"/>
</dbReference>
<dbReference type="PDB" id="6MTC">
    <property type="method" value="EM"/>
    <property type="resolution" value="3.40 A"/>
    <property type="chains" value="KK=1-96"/>
</dbReference>
<dbReference type="PDB" id="6MTD">
    <property type="method" value="EM"/>
    <property type="resolution" value="3.30 A"/>
    <property type="chains" value="KK=1-96"/>
</dbReference>
<dbReference type="PDB" id="6MTE">
    <property type="method" value="EM"/>
    <property type="resolution" value="3.40 A"/>
    <property type="chains" value="KK=1-96"/>
</dbReference>
<dbReference type="PDB" id="6P4G">
    <property type="method" value="EM"/>
    <property type="resolution" value="3.10 A"/>
    <property type="chains" value="L=1-149"/>
</dbReference>
<dbReference type="PDB" id="6P4H">
    <property type="method" value="EM"/>
    <property type="resolution" value="3.20 A"/>
    <property type="chains" value="L=1-149"/>
</dbReference>
<dbReference type="PDB" id="6P5I">
    <property type="method" value="EM"/>
    <property type="resolution" value="3.10 A"/>
    <property type="chains" value="L=1-149"/>
</dbReference>
<dbReference type="PDB" id="6P5J">
    <property type="method" value="EM"/>
    <property type="resolution" value="3.10 A"/>
    <property type="chains" value="L=1-149"/>
</dbReference>
<dbReference type="PDB" id="6P5K">
    <property type="method" value="EM"/>
    <property type="resolution" value="3.10 A"/>
    <property type="chains" value="L=1-149"/>
</dbReference>
<dbReference type="PDB" id="6P5N">
    <property type="method" value="EM"/>
    <property type="resolution" value="3.20 A"/>
    <property type="chains" value="L=1-149"/>
</dbReference>
<dbReference type="PDB" id="6R5Q">
    <property type="method" value="EM"/>
    <property type="resolution" value="3.00 A"/>
    <property type="chains" value="SS=1-96"/>
</dbReference>
<dbReference type="PDB" id="6R6G">
    <property type="method" value="EM"/>
    <property type="resolution" value="3.70 A"/>
    <property type="chains" value="SS=1-96"/>
</dbReference>
<dbReference type="PDB" id="6R6P">
    <property type="method" value="EM"/>
    <property type="resolution" value="3.10 A"/>
    <property type="chains" value="SS=1-96"/>
</dbReference>
<dbReference type="PDB" id="6R7Q">
    <property type="method" value="EM"/>
    <property type="resolution" value="3.90 A"/>
    <property type="chains" value="SS=1-96"/>
</dbReference>
<dbReference type="PDB" id="6SGC">
    <property type="method" value="EM"/>
    <property type="resolution" value="2.80 A"/>
    <property type="chains" value="L1=1-165"/>
</dbReference>
<dbReference type="PDB" id="6W2S">
    <property type="method" value="EM"/>
    <property type="resolution" value="3.00 A"/>
    <property type="chains" value="L=1-149"/>
</dbReference>
<dbReference type="PDB" id="6W2T">
    <property type="method" value="EM"/>
    <property type="resolution" value="3.36 A"/>
    <property type="chains" value="L=1-149"/>
</dbReference>
<dbReference type="PDB" id="6YAL">
    <property type="method" value="EM"/>
    <property type="resolution" value="3.00 A"/>
    <property type="chains" value="M=1-98"/>
</dbReference>
<dbReference type="PDB" id="6YAM">
    <property type="method" value="EM"/>
    <property type="resolution" value="3.60 A"/>
    <property type="chains" value="M=1-98"/>
</dbReference>
<dbReference type="PDB" id="6YAN">
    <property type="method" value="EM"/>
    <property type="resolution" value="3.48 A"/>
    <property type="chains" value="M=1-98"/>
</dbReference>
<dbReference type="PDB" id="6ZVK">
    <property type="method" value="EM"/>
    <property type="resolution" value="3.49 A"/>
    <property type="chains" value="E3=1-98"/>
</dbReference>
<dbReference type="PDB" id="7A01">
    <property type="method" value="EM"/>
    <property type="resolution" value="3.60 A"/>
    <property type="chains" value="E3=1-98"/>
</dbReference>
<dbReference type="PDB" id="7JQB">
    <property type="method" value="EM"/>
    <property type="resolution" value="2.70 A"/>
    <property type="chains" value="L=1-165"/>
</dbReference>
<dbReference type="PDB" id="7JQC">
    <property type="method" value="EM"/>
    <property type="resolution" value="3.30 A"/>
    <property type="chains" value="L=1-165"/>
</dbReference>
<dbReference type="PDB" id="7MDZ">
    <property type="method" value="EM"/>
    <property type="resolution" value="3.20 A"/>
    <property type="chains" value="KK=1-165"/>
</dbReference>
<dbReference type="PDB" id="7NWI">
    <property type="method" value="EM"/>
    <property type="resolution" value="3.13 A"/>
    <property type="chains" value="KK=1-98"/>
</dbReference>
<dbReference type="PDB" id="7O7Y">
    <property type="method" value="EM"/>
    <property type="resolution" value="2.20 A"/>
    <property type="chains" value="Aj=1-165"/>
</dbReference>
<dbReference type="PDB" id="7O7Z">
    <property type="method" value="EM"/>
    <property type="resolution" value="2.40 A"/>
    <property type="chains" value="Aj=1-165"/>
</dbReference>
<dbReference type="PDB" id="7O80">
    <property type="method" value="EM"/>
    <property type="resolution" value="2.90 A"/>
    <property type="chains" value="Aj=1-165"/>
</dbReference>
<dbReference type="PDB" id="7O81">
    <property type="method" value="EM"/>
    <property type="resolution" value="3.10 A"/>
    <property type="chains" value="Aj=1-165"/>
</dbReference>
<dbReference type="PDB" id="7OYD">
    <property type="method" value="EM"/>
    <property type="resolution" value="2.30 A"/>
    <property type="chains" value="KK=1-165"/>
</dbReference>
<dbReference type="PDB" id="7SYG">
    <property type="method" value="EM"/>
    <property type="resolution" value="4.30 A"/>
    <property type="chains" value="L=1-149"/>
</dbReference>
<dbReference type="PDB" id="7SYH">
    <property type="method" value="EM"/>
    <property type="resolution" value="4.60 A"/>
    <property type="chains" value="L=1-149"/>
</dbReference>
<dbReference type="PDB" id="7SYI">
    <property type="method" value="EM"/>
    <property type="resolution" value="4.50 A"/>
    <property type="chains" value="L=1-149"/>
</dbReference>
<dbReference type="PDB" id="7SYJ">
    <property type="method" value="EM"/>
    <property type="resolution" value="4.80 A"/>
    <property type="chains" value="L=1-149"/>
</dbReference>
<dbReference type="PDB" id="7SYK">
    <property type="method" value="EM"/>
    <property type="resolution" value="4.20 A"/>
    <property type="chains" value="L=1-149"/>
</dbReference>
<dbReference type="PDB" id="7SYL">
    <property type="method" value="EM"/>
    <property type="resolution" value="4.50 A"/>
    <property type="chains" value="L=1-149"/>
</dbReference>
<dbReference type="PDB" id="7SYM">
    <property type="method" value="EM"/>
    <property type="resolution" value="4.80 A"/>
    <property type="chains" value="L=1-149"/>
</dbReference>
<dbReference type="PDB" id="7SYN">
    <property type="method" value="EM"/>
    <property type="resolution" value="4.00 A"/>
    <property type="chains" value="L=1-149"/>
</dbReference>
<dbReference type="PDB" id="7SYO">
    <property type="method" value="EM"/>
    <property type="resolution" value="4.60 A"/>
    <property type="chains" value="L=1-149"/>
</dbReference>
<dbReference type="PDB" id="7SYP">
    <property type="method" value="EM"/>
    <property type="resolution" value="4.00 A"/>
    <property type="chains" value="L=1-149"/>
</dbReference>
<dbReference type="PDB" id="7SYQ">
    <property type="method" value="EM"/>
    <property type="resolution" value="3.80 A"/>
    <property type="chains" value="L=1-149"/>
</dbReference>
<dbReference type="PDB" id="7SYR">
    <property type="method" value="EM"/>
    <property type="resolution" value="3.60 A"/>
    <property type="chains" value="L=1-149"/>
</dbReference>
<dbReference type="PDB" id="7SYS">
    <property type="method" value="EM"/>
    <property type="resolution" value="3.50 A"/>
    <property type="chains" value="L=1-149"/>
</dbReference>
<dbReference type="PDB" id="7SYT">
    <property type="method" value="EM"/>
    <property type="resolution" value="4.40 A"/>
    <property type="chains" value="L=1-149"/>
</dbReference>
<dbReference type="PDB" id="7SYU">
    <property type="method" value="EM"/>
    <property type="resolution" value="4.60 A"/>
    <property type="chains" value="L=1-149"/>
</dbReference>
<dbReference type="PDB" id="7SYV">
    <property type="method" value="EM"/>
    <property type="resolution" value="3.90 A"/>
    <property type="chains" value="L=1-149"/>
</dbReference>
<dbReference type="PDB" id="7SYW">
    <property type="method" value="EM"/>
    <property type="resolution" value="3.70 A"/>
    <property type="chains" value="L=1-149"/>
</dbReference>
<dbReference type="PDB" id="7SYX">
    <property type="method" value="EM"/>
    <property type="resolution" value="3.70 A"/>
    <property type="chains" value="L=1-149"/>
</dbReference>
<dbReference type="PDB" id="7TOQ">
    <property type="method" value="EM"/>
    <property type="resolution" value="3.10 A"/>
    <property type="chains" value="AS10=1-96"/>
</dbReference>
<dbReference type="PDB" id="7TOR">
    <property type="method" value="EM"/>
    <property type="resolution" value="2.90 A"/>
    <property type="chains" value="AS10=1-96"/>
</dbReference>
<dbReference type="PDB" id="7UCJ">
    <property type="method" value="EM"/>
    <property type="resolution" value="3.10 A"/>
    <property type="chains" value="KK=1-96"/>
</dbReference>
<dbReference type="PDB" id="7UCK">
    <property type="method" value="EM"/>
    <property type="resolution" value="2.80 A"/>
    <property type="chains" value="KK=1-96"/>
</dbReference>
<dbReference type="PDB" id="7ZJW">
    <property type="method" value="EM"/>
    <property type="resolution" value="2.80 A"/>
    <property type="chains" value="SV=1-165"/>
</dbReference>
<dbReference type="PDB" id="7ZJX">
    <property type="method" value="EM"/>
    <property type="resolution" value="3.10 A"/>
    <property type="chains" value="SV=1-165"/>
</dbReference>
<dbReference type="PDB" id="8BHF">
    <property type="method" value="EM"/>
    <property type="resolution" value="3.10 A"/>
    <property type="chains" value="L3=1-96"/>
</dbReference>
<dbReference type="PDB" id="8BTK">
    <property type="method" value="EM"/>
    <property type="resolution" value="3.50 A"/>
    <property type="chains" value="Aj=1-165"/>
</dbReference>
<dbReference type="PDB" id="8P2K">
    <property type="method" value="EM"/>
    <property type="resolution" value="2.90 A"/>
    <property type="chains" value="Aj=1-165"/>
</dbReference>
<dbReference type="PDBsum" id="3JAG"/>
<dbReference type="PDBsum" id="3JAH"/>
<dbReference type="PDBsum" id="3JAI"/>
<dbReference type="PDBsum" id="4D5L"/>
<dbReference type="PDBsum" id="4D61"/>
<dbReference type="PDBsum" id="4KZX"/>
<dbReference type="PDBsum" id="4KZY"/>
<dbReference type="PDBsum" id="4KZZ"/>
<dbReference type="PDBsum" id="5K0Y"/>
<dbReference type="PDBsum" id="5LZS"/>
<dbReference type="PDBsum" id="5LZT"/>
<dbReference type="PDBsum" id="5LZU"/>
<dbReference type="PDBsum" id="5LZV"/>
<dbReference type="PDBsum" id="5LZW"/>
<dbReference type="PDBsum" id="5LZX"/>
<dbReference type="PDBsum" id="5LZY"/>
<dbReference type="PDBsum" id="5LZZ"/>
<dbReference type="PDBsum" id="6D90"/>
<dbReference type="PDBsum" id="6GZ3"/>
<dbReference type="PDBsum" id="6HCF"/>
<dbReference type="PDBsum" id="6HCJ"/>
<dbReference type="PDBsum" id="6HCM"/>
<dbReference type="PDBsum" id="6HCQ"/>
<dbReference type="PDBsum" id="6MTB"/>
<dbReference type="PDBsum" id="6MTC"/>
<dbReference type="PDBsum" id="6MTD"/>
<dbReference type="PDBsum" id="6MTE"/>
<dbReference type="PDBsum" id="6P4G"/>
<dbReference type="PDBsum" id="6P4H"/>
<dbReference type="PDBsum" id="6P5I"/>
<dbReference type="PDBsum" id="6P5J"/>
<dbReference type="PDBsum" id="6P5K"/>
<dbReference type="PDBsum" id="6P5N"/>
<dbReference type="PDBsum" id="6R5Q"/>
<dbReference type="PDBsum" id="6R6G"/>
<dbReference type="PDBsum" id="6R6P"/>
<dbReference type="PDBsum" id="6R7Q"/>
<dbReference type="PDBsum" id="6SGC"/>
<dbReference type="PDBsum" id="6W2S"/>
<dbReference type="PDBsum" id="6W2T"/>
<dbReference type="PDBsum" id="6YAL"/>
<dbReference type="PDBsum" id="6YAM"/>
<dbReference type="PDBsum" id="6YAN"/>
<dbReference type="PDBsum" id="6ZVK"/>
<dbReference type="PDBsum" id="7A01"/>
<dbReference type="PDBsum" id="7JQB"/>
<dbReference type="PDBsum" id="7JQC"/>
<dbReference type="PDBsum" id="7MDZ"/>
<dbReference type="PDBsum" id="7NWI"/>
<dbReference type="PDBsum" id="7O7Y"/>
<dbReference type="PDBsum" id="7O7Z"/>
<dbReference type="PDBsum" id="7O80"/>
<dbReference type="PDBsum" id="7O81"/>
<dbReference type="PDBsum" id="7OYD"/>
<dbReference type="PDBsum" id="7SYG"/>
<dbReference type="PDBsum" id="7SYH"/>
<dbReference type="PDBsum" id="7SYI"/>
<dbReference type="PDBsum" id="7SYJ"/>
<dbReference type="PDBsum" id="7SYK"/>
<dbReference type="PDBsum" id="7SYL"/>
<dbReference type="PDBsum" id="7SYM"/>
<dbReference type="PDBsum" id="7SYN"/>
<dbReference type="PDBsum" id="7SYO"/>
<dbReference type="PDBsum" id="7SYP"/>
<dbReference type="PDBsum" id="7SYQ"/>
<dbReference type="PDBsum" id="7SYR"/>
<dbReference type="PDBsum" id="7SYS"/>
<dbReference type="PDBsum" id="7SYT"/>
<dbReference type="PDBsum" id="7SYU"/>
<dbReference type="PDBsum" id="7SYV"/>
<dbReference type="PDBsum" id="7SYW"/>
<dbReference type="PDBsum" id="7SYX"/>
<dbReference type="PDBsum" id="7TOQ"/>
<dbReference type="PDBsum" id="7TOR"/>
<dbReference type="PDBsum" id="7UCJ"/>
<dbReference type="PDBsum" id="7UCK"/>
<dbReference type="PDBsum" id="7ZJW"/>
<dbReference type="PDBsum" id="7ZJX"/>
<dbReference type="PDBsum" id="8BHF"/>
<dbReference type="PDBsum" id="8BTK"/>
<dbReference type="PDBsum" id="8P2K"/>
<dbReference type="EMDB" id="EMD-0098"/>
<dbReference type="EMDB" id="EMD-0099"/>
<dbReference type="EMDB" id="EMD-0100"/>
<dbReference type="EMDB" id="EMD-10181"/>
<dbReference type="EMDB" id="EMD-10761"/>
<dbReference type="EMDB" id="EMD-11459"/>
<dbReference type="EMDB" id="EMD-11590"/>
<dbReference type="EMDB" id="EMD-12633"/>
<dbReference type="EMDB" id="EMD-8190"/>
<dbReference type="SMR" id="G1T168"/>
<dbReference type="PaxDb" id="9986-ENSOCUP00000009787"/>
<dbReference type="Ensembl" id="ENSOCUT00000025809.1">
    <property type="protein sequence ID" value="ENSOCUP00000019041.1"/>
    <property type="gene ID" value="ENSOCUG00000026942.1"/>
</dbReference>
<dbReference type="GeneID" id="100352164"/>
<dbReference type="KEGG" id="ocu:100348511"/>
<dbReference type="KEGG" id="ocu:100352164"/>
<dbReference type="CTD" id="6204"/>
<dbReference type="eggNOG" id="KOG3344">
    <property type="taxonomic scope" value="Eukaryota"/>
</dbReference>
<dbReference type="HOGENOM" id="CLU_089349_3_1_1"/>
<dbReference type="OrthoDB" id="5211809at2759"/>
<dbReference type="TreeFam" id="TF319100"/>
<dbReference type="EvolutionaryTrace" id="G1T168"/>
<dbReference type="Proteomes" id="UP000001811">
    <property type="component" value="Chromosome 17"/>
</dbReference>
<dbReference type="Bgee" id="ENSOCUG00000011373">
    <property type="expression patterns" value="Expressed in embryo and 15 other cell types or tissues"/>
</dbReference>
<dbReference type="GO" id="GO:0022626">
    <property type="term" value="C:cytosolic ribosome"/>
    <property type="evidence" value="ECO:0000314"/>
    <property type="project" value="UniProtKB"/>
</dbReference>
<dbReference type="GO" id="GO:0022627">
    <property type="term" value="C:cytosolic small ribosomal subunit"/>
    <property type="evidence" value="ECO:0007669"/>
    <property type="project" value="TreeGrafter"/>
</dbReference>
<dbReference type="GO" id="GO:0005730">
    <property type="term" value="C:nucleolus"/>
    <property type="evidence" value="ECO:0007669"/>
    <property type="project" value="UniProtKB-SubCell"/>
</dbReference>
<dbReference type="GO" id="GO:0003723">
    <property type="term" value="F:RNA binding"/>
    <property type="evidence" value="ECO:0007669"/>
    <property type="project" value="TreeGrafter"/>
</dbReference>
<dbReference type="GO" id="GO:0003735">
    <property type="term" value="F:structural constituent of ribosome"/>
    <property type="evidence" value="ECO:0000314"/>
    <property type="project" value="UniProtKB"/>
</dbReference>
<dbReference type="FunFam" id="1.10.10.10:FF:001335">
    <property type="entry name" value="40S ribosomal protein S10"/>
    <property type="match status" value="1"/>
</dbReference>
<dbReference type="Gene3D" id="1.10.10.10">
    <property type="entry name" value="Winged helix-like DNA-binding domain superfamily/Winged helix DNA-binding domain"/>
    <property type="match status" value="1"/>
</dbReference>
<dbReference type="InterPro" id="IPR005326">
    <property type="entry name" value="Plectin_eS10_N"/>
</dbReference>
<dbReference type="InterPro" id="IPR037447">
    <property type="entry name" value="Ribosomal_eS10"/>
</dbReference>
<dbReference type="InterPro" id="IPR036388">
    <property type="entry name" value="WH-like_DNA-bd_sf"/>
</dbReference>
<dbReference type="PANTHER" id="PTHR12146">
    <property type="entry name" value="40S RIBOSOMAL PROTEIN S10"/>
    <property type="match status" value="1"/>
</dbReference>
<dbReference type="PANTHER" id="PTHR12146:SF10">
    <property type="entry name" value="SMALL RIBOSOMAL SUBUNIT PROTEIN ES10"/>
    <property type="match status" value="1"/>
</dbReference>
<dbReference type="Pfam" id="PF03501">
    <property type="entry name" value="S10_plectin"/>
    <property type="match status" value="1"/>
</dbReference>
<protein>
    <recommendedName>
        <fullName>Small ribosomal subunit protein eS10</fullName>
    </recommendedName>
    <alternativeName>
        <fullName>40S ribosomal protein S10</fullName>
    </alternativeName>
</protein>
<feature type="chain" id="PRO_0000460060" description="Small ribosomal subunit protein eS10">
    <location>
        <begin position="1"/>
        <end position="165"/>
    </location>
</feature>
<feature type="region of interest" description="Disordered" evidence="3">
    <location>
        <begin position="92"/>
        <end position="165"/>
    </location>
</feature>
<feature type="compositionally biased region" description="Basic and acidic residues" evidence="3">
    <location>
        <begin position="97"/>
        <end position="128"/>
    </location>
</feature>
<feature type="compositionally biased region" description="Gly residues" evidence="3">
    <location>
        <begin position="154"/>
        <end position="165"/>
    </location>
</feature>
<feature type="modified residue" description="Phosphotyrosine" evidence="2">
    <location>
        <position position="12"/>
    </location>
</feature>
<feature type="modified residue" description="Phosphoserine" evidence="2">
    <location>
        <position position="146"/>
    </location>
</feature>
<feature type="modified residue" description="Omega-N-methylarginine" evidence="2">
    <location>
        <position position="153"/>
    </location>
</feature>
<feature type="modified residue" description="Symmetric dimethylarginine" evidence="1">
    <location>
        <position position="158"/>
    </location>
</feature>
<feature type="modified residue" description="Symmetric dimethylarginine" evidence="1">
    <location>
        <position position="160"/>
    </location>
</feature>
<feature type="cross-link" description="Glycyl lysine isopeptide (Lys-Gly) (interchain with G-Cter in ubiquitin)" evidence="1">
    <location>
        <position position="138"/>
    </location>
</feature>
<feature type="cross-link" description="Glycyl lysine isopeptide (Lys-Gly) (interchain with G-Cter in ubiquitin)" evidence="1">
    <location>
        <position position="139"/>
    </location>
</feature>
<accession>G1T168</accession>
<keyword id="KW-0002">3D-structure</keyword>
<keyword id="KW-0963">Cytoplasm</keyword>
<keyword id="KW-1017">Isopeptide bond</keyword>
<keyword id="KW-0488">Methylation</keyword>
<keyword id="KW-0539">Nucleus</keyword>
<keyword id="KW-0597">Phosphoprotein</keyword>
<keyword id="KW-1185">Reference proteome</keyword>
<keyword id="KW-0687">Ribonucleoprotein</keyword>
<keyword id="KW-0689">Ribosomal protein</keyword>
<keyword id="KW-0832">Ubl conjugation</keyword>
<organism>
    <name type="scientific">Oryctolagus cuniculus</name>
    <name type="common">Rabbit</name>
    <dbReference type="NCBI Taxonomy" id="9986"/>
    <lineage>
        <taxon>Eukaryota</taxon>
        <taxon>Metazoa</taxon>
        <taxon>Chordata</taxon>
        <taxon>Craniata</taxon>
        <taxon>Vertebrata</taxon>
        <taxon>Euteleostomi</taxon>
        <taxon>Mammalia</taxon>
        <taxon>Eutheria</taxon>
        <taxon>Euarchontoglires</taxon>
        <taxon>Glires</taxon>
        <taxon>Lagomorpha</taxon>
        <taxon>Leporidae</taxon>
        <taxon>Oryctolagus</taxon>
    </lineage>
</organism>
<name>RS10_RABIT</name>